<evidence type="ECO:0000250" key="1">
    <source>
        <dbReference type="UniProtKB" id="P97427"/>
    </source>
</evidence>
<evidence type="ECO:0000250" key="2">
    <source>
        <dbReference type="UniProtKB" id="Q14194"/>
    </source>
</evidence>
<evidence type="ECO:0000256" key="3">
    <source>
        <dbReference type="SAM" id="MobiDB-lite"/>
    </source>
</evidence>
<evidence type="ECO:0000269" key="4">
    <source>
    </source>
</evidence>
<evidence type="ECO:0000305" key="5"/>
<evidence type="ECO:0007744" key="6">
    <source>
    </source>
</evidence>
<gene>
    <name type="primary">Crmp1</name>
    <name type="synonym">Dpysl1</name>
</gene>
<comment type="function">
    <text evidence="1 2">Necessary for signaling by class 3 semaphorins and subsequent remodeling of the cytoskeleton (By similarity). Plays a role in axon guidance (By similarity). During the axon guidance process, acts downstream of SEMA3A to promote FLNA dissociation from F-actin which results in the rearrangement of the actin cytoskeleton and the collapse of the growth cone (By similarity). Involved in invasive growth and cell migration. May participate in cytokinesis (By similarity).</text>
</comment>
<comment type="subunit">
    <text evidence="1 4">Homotetramer, and heterotetramer with DPYSL2, DPYSL3, DPYSL4 or DPYSL5 (By similarity). Interacts with PLXNA1 (By similarity). Interacts with FLNA (via calponin-homology (CH) domain 1 and filamin repeat 24); the interaction alters FLNA ternary structure and thus promotes FLNA dissociation from F-actin (PubMed:25358863).</text>
</comment>
<comment type="subcellular location">
    <subcellularLocation>
        <location evidence="2">Cytoplasm</location>
    </subcellularLocation>
    <subcellularLocation>
        <location evidence="2">Cytoplasm</location>
        <location evidence="2">Cytoskeleton</location>
        <location evidence="2">Microtubule organizing center</location>
        <location evidence="2">Centrosome</location>
    </subcellularLocation>
    <subcellularLocation>
        <location evidence="2">Cytoplasm</location>
        <location evidence="2">Cytoskeleton</location>
        <location evidence="2">Spindle</location>
    </subcellularLocation>
    <subcellularLocation>
        <location evidence="1">Cell projection</location>
        <location evidence="1">Growth cone</location>
    </subcellularLocation>
    <subcellularLocation>
        <location evidence="1">Cytoplasm</location>
        <location evidence="1">Cytoskeleton</location>
    </subcellularLocation>
    <subcellularLocation>
        <location evidence="1">Perikaryon</location>
    </subcellularLocation>
    <text evidence="1 2">Associated with centrosomes and the mitotic spindle during metaphase (By similarity). Colocalizes with FLNA and tubulin in the central region of DRG neuron growth cone. Following SEMA3A stimulation of DRG neurons, colocalizes with F-actin (By similarity).</text>
</comment>
<comment type="developmental stage">
    <text evidence="4">Expressed in the brain of 20 dpc embryos.</text>
</comment>
<comment type="PTM">
    <text evidence="2">Phosphorylation at Ser-522 enhances CRMP1-mediated alteration of FLNA ternary structure and FLNA dissociation from F-actin.</text>
</comment>
<comment type="similarity">
    <text evidence="5">Belongs to the metallo-dependent hydrolases superfamily. Hydantoinase/dihydropyrimidinase family.</text>
</comment>
<comment type="caution">
    <text evidence="5">Lacks most of the conserved residues that are essential for binding the metal cofactor and hence for dihydropyrimidinase activity. Its enzyme activity is therefore unsure.</text>
</comment>
<accession>Q62950</accession>
<accession>P70546</accession>
<protein>
    <recommendedName>
        <fullName>Dihydropyrimidinase-related protein 1</fullName>
        <shortName>DRP-1</shortName>
    </recommendedName>
    <alternativeName>
        <fullName>Collapsin response mediator protein 1</fullName>
        <shortName>CRMP-1</shortName>
    </alternativeName>
    <alternativeName>
        <fullName evidence="5">Inactive dihydropyrimidinase</fullName>
    </alternativeName>
</protein>
<keyword id="KW-0966">Cell projection</keyword>
<keyword id="KW-0963">Cytoplasm</keyword>
<keyword id="KW-0206">Cytoskeleton</keyword>
<keyword id="KW-0944">Nitration</keyword>
<keyword id="KW-0597">Phosphoprotein</keyword>
<keyword id="KW-1185">Reference proteome</keyword>
<organism>
    <name type="scientific">Rattus norvegicus</name>
    <name type="common">Rat</name>
    <dbReference type="NCBI Taxonomy" id="10116"/>
    <lineage>
        <taxon>Eukaryota</taxon>
        <taxon>Metazoa</taxon>
        <taxon>Chordata</taxon>
        <taxon>Craniata</taxon>
        <taxon>Vertebrata</taxon>
        <taxon>Euteleostomi</taxon>
        <taxon>Mammalia</taxon>
        <taxon>Eutheria</taxon>
        <taxon>Euarchontoglires</taxon>
        <taxon>Glires</taxon>
        <taxon>Rodentia</taxon>
        <taxon>Myomorpha</taxon>
        <taxon>Muroidea</taxon>
        <taxon>Muridae</taxon>
        <taxon>Murinae</taxon>
        <taxon>Rattus</taxon>
    </lineage>
</organism>
<dbReference type="EMBL" id="U52102">
    <property type="protein sequence ID" value="AAB03280.1"/>
    <property type="molecule type" value="mRNA"/>
</dbReference>
<dbReference type="EMBL" id="U52095">
    <property type="protein sequence ID" value="AAB07042.1"/>
    <property type="molecule type" value="mRNA"/>
</dbReference>
<dbReference type="RefSeq" id="NP_037064.1">
    <property type="nucleotide sequence ID" value="NM_012932.3"/>
</dbReference>
<dbReference type="SMR" id="Q62950"/>
<dbReference type="BioGRID" id="247450">
    <property type="interactions" value="6"/>
</dbReference>
<dbReference type="FunCoup" id="Q62950">
    <property type="interactions" value="695"/>
</dbReference>
<dbReference type="IntAct" id="Q62950">
    <property type="interactions" value="5"/>
</dbReference>
<dbReference type="MINT" id="Q62950"/>
<dbReference type="STRING" id="10116.ENSRNOP00000063671"/>
<dbReference type="MEROPS" id="M38.974"/>
<dbReference type="GlyGen" id="Q62950">
    <property type="glycosylation" value="1 site, 1 O-linked glycan (1 site)"/>
</dbReference>
<dbReference type="iPTMnet" id="Q62950"/>
<dbReference type="PhosphoSitePlus" id="Q62950"/>
<dbReference type="jPOST" id="Q62950"/>
<dbReference type="PaxDb" id="10116-ENSRNOP00000063671"/>
<dbReference type="Ensembl" id="ENSRNOT00000065334.3">
    <property type="protein sequence ID" value="ENSRNOP00000063671.1"/>
    <property type="gene ID" value="ENSRNOG00000004781.7"/>
</dbReference>
<dbReference type="GeneID" id="25415"/>
<dbReference type="KEGG" id="rno:25415"/>
<dbReference type="AGR" id="RGD:2407"/>
<dbReference type="CTD" id="1400"/>
<dbReference type="RGD" id="2407">
    <property type="gene designation" value="Crmp1"/>
</dbReference>
<dbReference type="eggNOG" id="KOG2584">
    <property type="taxonomic scope" value="Eukaryota"/>
</dbReference>
<dbReference type="GeneTree" id="ENSGT01030000234527"/>
<dbReference type="HOGENOM" id="CLU_015572_2_2_1"/>
<dbReference type="InParanoid" id="Q62950"/>
<dbReference type="PhylomeDB" id="Q62950"/>
<dbReference type="Reactome" id="R-RNO-399956">
    <property type="pathway name" value="CRMPs in Sema3A signaling"/>
</dbReference>
<dbReference type="PRO" id="PR:Q62950"/>
<dbReference type="Proteomes" id="UP000002494">
    <property type="component" value="Chromosome 14"/>
</dbReference>
<dbReference type="Bgee" id="ENSRNOG00000004781">
    <property type="expression patterns" value="Expressed in frontal cortex and 13 other cell types or tissues"/>
</dbReference>
<dbReference type="GO" id="GO:0015629">
    <property type="term" value="C:actin cytoskeleton"/>
    <property type="evidence" value="ECO:0000266"/>
    <property type="project" value="RGD"/>
</dbReference>
<dbReference type="GO" id="GO:0005813">
    <property type="term" value="C:centrosome"/>
    <property type="evidence" value="ECO:0007669"/>
    <property type="project" value="UniProtKB-SubCell"/>
</dbReference>
<dbReference type="GO" id="GO:0005829">
    <property type="term" value="C:cytosol"/>
    <property type="evidence" value="ECO:0000318"/>
    <property type="project" value="GO_Central"/>
</dbReference>
<dbReference type="GO" id="GO:0030425">
    <property type="term" value="C:dendrite"/>
    <property type="evidence" value="ECO:0000266"/>
    <property type="project" value="RGD"/>
</dbReference>
<dbReference type="GO" id="GO:0030426">
    <property type="term" value="C:growth cone"/>
    <property type="evidence" value="ECO:0000266"/>
    <property type="project" value="RGD"/>
</dbReference>
<dbReference type="GO" id="GO:0030496">
    <property type="term" value="C:midbody"/>
    <property type="evidence" value="ECO:0000266"/>
    <property type="project" value="RGD"/>
</dbReference>
<dbReference type="GO" id="GO:0043025">
    <property type="term" value="C:neuronal cell body"/>
    <property type="evidence" value="ECO:0000266"/>
    <property type="project" value="RGD"/>
</dbReference>
<dbReference type="GO" id="GO:0043204">
    <property type="term" value="C:perikaryon"/>
    <property type="evidence" value="ECO:0007669"/>
    <property type="project" value="UniProtKB-SubCell"/>
</dbReference>
<dbReference type="GO" id="GO:0098794">
    <property type="term" value="C:postsynapse"/>
    <property type="evidence" value="ECO:0000266"/>
    <property type="project" value="RGD"/>
</dbReference>
<dbReference type="GO" id="GO:0098793">
    <property type="term" value="C:presynapse"/>
    <property type="evidence" value="ECO:0000266"/>
    <property type="project" value="RGD"/>
</dbReference>
<dbReference type="GO" id="GO:0005819">
    <property type="term" value="C:spindle"/>
    <property type="evidence" value="ECO:0007669"/>
    <property type="project" value="UniProtKB-SubCell"/>
</dbReference>
<dbReference type="GO" id="GO:0031005">
    <property type="term" value="F:filamin binding"/>
    <property type="evidence" value="ECO:0000353"/>
    <property type="project" value="WormBase"/>
</dbReference>
<dbReference type="GO" id="GO:0016812">
    <property type="term" value="F:hydrolase activity, acting on carbon-nitrogen (but not peptide) bonds, in cyclic amides"/>
    <property type="evidence" value="ECO:0000318"/>
    <property type="project" value="GO_Central"/>
</dbReference>
<dbReference type="GO" id="GO:0042802">
    <property type="term" value="F:identical protein binding"/>
    <property type="evidence" value="ECO:0000266"/>
    <property type="project" value="RGD"/>
</dbReference>
<dbReference type="GO" id="GO:0051219">
    <property type="term" value="F:phosphoprotein binding"/>
    <property type="evidence" value="ECO:0000266"/>
    <property type="project" value="RGD"/>
</dbReference>
<dbReference type="GO" id="GO:0010977">
    <property type="term" value="P:negative regulation of neuron projection development"/>
    <property type="evidence" value="ECO:0000266"/>
    <property type="project" value="RGD"/>
</dbReference>
<dbReference type="GO" id="GO:0048666">
    <property type="term" value="P:neuron development"/>
    <property type="evidence" value="ECO:0000270"/>
    <property type="project" value="RGD"/>
</dbReference>
<dbReference type="GO" id="GO:0150052">
    <property type="term" value="P:regulation of postsynapse assembly"/>
    <property type="evidence" value="ECO:0000266"/>
    <property type="project" value="RGD"/>
</dbReference>
<dbReference type="GO" id="GO:0071526">
    <property type="term" value="P:semaphorin-plexin signaling pathway"/>
    <property type="evidence" value="ECO:0000266"/>
    <property type="project" value="RGD"/>
</dbReference>
<dbReference type="CDD" id="cd01314">
    <property type="entry name" value="D-HYD"/>
    <property type="match status" value="1"/>
</dbReference>
<dbReference type="FunFam" id="3.20.20.140:FF:000217">
    <property type="entry name" value="Dihydropyrimidinase-related protein 1"/>
    <property type="match status" value="1"/>
</dbReference>
<dbReference type="FunFam" id="2.30.40.10:FF:000021">
    <property type="entry name" value="Dihydropyrimidinase-related protein 2"/>
    <property type="match status" value="1"/>
</dbReference>
<dbReference type="Gene3D" id="3.20.20.140">
    <property type="entry name" value="Metal-dependent hydrolases"/>
    <property type="match status" value="1"/>
</dbReference>
<dbReference type="Gene3D" id="2.30.40.10">
    <property type="entry name" value="Urease, subunit C, domain 1"/>
    <property type="match status" value="1"/>
</dbReference>
<dbReference type="InterPro" id="IPR006680">
    <property type="entry name" value="Amidohydro-rel"/>
</dbReference>
<dbReference type="InterPro" id="IPR011778">
    <property type="entry name" value="Hydantoinase/dihydroPyrase"/>
</dbReference>
<dbReference type="InterPro" id="IPR011059">
    <property type="entry name" value="Metal-dep_hydrolase_composite"/>
</dbReference>
<dbReference type="InterPro" id="IPR032466">
    <property type="entry name" value="Metal_Hydrolase"/>
</dbReference>
<dbReference type="InterPro" id="IPR050378">
    <property type="entry name" value="Metallo-dep_Hydrolases_sf"/>
</dbReference>
<dbReference type="NCBIfam" id="TIGR02033">
    <property type="entry name" value="D-hydantoinase"/>
    <property type="match status" value="1"/>
</dbReference>
<dbReference type="PANTHER" id="PTHR11647:SF54">
    <property type="entry name" value="DIHYDROPYRIMIDINASE-RELATED PROTEIN 1"/>
    <property type="match status" value="1"/>
</dbReference>
<dbReference type="PANTHER" id="PTHR11647">
    <property type="entry name" value="HYDRANTOINASE/DIHYDROPYRIMIDINASE FAMILY MEMBER"/>
    <property type="match status" value="1"/>
</dbReference>
<dbReference type="Pfam" id="PF01979">
    <property type="entry name" value="Amidohydro_1"/>
    <property type="match status" value="1"/>
</dbReference>
<dbReference type="SUPFAM" id="SSF51338">
    <property type="entry name" value="Composite domain of metallo-dependent hydrolases"/>
    <property type="match status" value="2"/>
</dbReference>
<dbReference type="SUPFAM" id="SSF51556">
    <property type="entry name" value="Metallo-dependent hydrolases"/>
    <property type="match status" value="1"/>
</dbReference>
<reference key="1">
    <citation type="journal article" date="1996" name="J. Neurosci.">
        <title>A family of rat CRMP genes is differentially expressed in the nervous system.</title>
        <authorList>
            <person name="Wang L."/>
            <person name="Strittmatter S.M."/>
        </authorList>
    </citation>
    <scope>NUCLEOTIDE SEQUENCE [MRNA]</scope>
    <source>
        <tissue>Brain</tissue>
    </source>
</reference>
<reference key="2">
    <citation type="submission" date="1996-03" db="EMBL/GenBank/DDBJ databases">
        <authorList>
            <person name="Quach T.T."/>
            <person name="Honnorat J."/>
            <person name="Aguera M."/>
            <person name="Belin M.-F."/>
            <person name="Kolattukudy P.E."/>
            <person name="Antoine J.-C."/>
        </authorList>
    </citation>
    <scope>NUCLEOTIDE SEQUENCE [MRNA]</scope>
    <source>
        <strain>Sprague-Dawley</strain>
        <tissue>Brain</tissue>
    </source>
</reference>
<reference key="3">
    <citation type="journal article" date="1997" name="J. Neurochem.">
        <title>Brain CRMP forms heterotetramers similar to liver dihydropyrimidinase.</title>
        <authorList>
            <person name="Wang L.H."/>
            <person name="Strittmatter S.M."/>
        </authorList>
    </citation>
    <scope>SUBUNIT</scope>
    <scope>INTERACTION WITH DPYSL2; DPYSL3 AND DPYSL4</scope>
</reference>
<reference key="4">
    <citation type="journal article" date="2012" name="Nat. Commun.">
        <title>Quantitative maps of protein phosphorylation sites across 14 different rat organs and tissues.</title>
        <authorList>
            <person name="Lundby A."/>
            <person name="Secher A."/>
            <person name="Lage K."/>
            <person name="Nordsborg N.B."/>
            <person name="Dmytriyev A."/>
            <person name="Lundby C."/>
            <person name="Olsen J.V."/>
        </authorList>
    </citation>
    <scope>PHOSPHORYLATION [LARGE SCALE ANALYSIS] AT SER-8; SER-521 AND SER-522</scope>
    <scope>IDENTIFICATION BY MASS SPECTROMETRY [LARGE SCALE ANALYSIS]</scope>
</reference>
<reference key="5">
    <citation type="journal article" date="2014" name="Nat. Commun.">
        <title>Amino- and carboxyl-terminal domains of Filamin-A interact with CRMP1 to mediate Sema3A signalling.</title>
        <authorList>
            <person name="Nakamura F."/>
            <person name="Kumeta K."/>
            <person name="Hida T."/>
            <person name="Isono T."/>
            <person name="Nakayama Y."/>
            <person name="Kuramata-Matsuoka E."/>
            <person name="Yamashita N."/>
            <person name="Uchida Y."/>
            <person name="Ogura K."/>
            <person name="Gengyo-Ando K."/>
            <person name="Mitani S."/>
            <person name="Ogino T."/>
            <person name="Goshima Y."/>
        </authorList>
    </citation>
    <scope>INTERACTION WITH FLNA</scope>
    <scope>DEVELOPMENTAL STAGE</scope>
</reference>
<sequence length="572" mass="62196">MSHQGKKSIPHITSDRLLIRGGRIINDDQSFYADVYLEDGLIKQIGENLIVPGGVKTIEANGRMVIPGGIDVNTYLQKPSQGMTSADDFFQGTRAALAGGTTMIIDHVVPEPGSSLLTSFEKWHEAADTKSCCDYSLHVDITSWYDGVREELEVLVQDKGVNSFQVYMAYKDLYQMSDSQLYEAFTFLKGLGAVILVHAENGDLIAQEQKRILEMGITGPEGHALSRPEELEAEAVFRAIAIAGRINCPVYITKVMSKSAADIIALARKKGPLVFGEPIAASLGTDGTHYWSKNWAKAAAFVTSPPLSPDPTTPDYLTSLLACGDLQVTGSGHCPYSTAQKAVGKDNFTLIPEGVNGIEERMTVVWDKAVATGKMDENQFVAVTSTNAAKIFNLYPRKGRIAVGSDADVVIWDPDKMKTLTAKSHKSTVEYNIFEGMECHGSPLVVISQGKIVFEDGNISVSKGMGRFIPRKPFPEHLYQRVRIRSKVFGLHSVSRGMYDGPVYEVPATPKHAAPAPSAKSSPSKHQPPPIRNLHQSNFSLSGAQIDDNNPRRTGHRIVAPPGGRSNITSLG</sequence>
<proteinExistence type="evidence at protein level"/>
<name>DPYL1_RAT</name>
<feature type="chain" id="PRO_0000165911" description="Dihydropyrimidinase-related protein 1">
    <location>
        <begin position="1"/>
        <end position="572"/>
    </location>
</feature>
<feature type="region of interest" description="Disordered" evidence="3">
    <location>
        <begin position="509"/>
        <end position="572"/>
    </location>
</feature>
<feature type="short sequence motif" description="Required for interaction with FLNA" evidence="2">
    <location>
        <begin position="246"/>
        <end position="247"/>
    </location>
</feature>
<feature type="compositionally biased region" description="Low complexity" evidence="3">
    <location>
        <begin position="509"/>
        <end position="525"/>
    </location>
</feature>
<feature type="compositionally biased region" description="Polar residues" evidence="3">
    <location>
        <begin position="534"/>
        <end position="543"/>
    </location>
</feature>
<feature type="modified residue" description="Phosphoserine" evidence="6">
    <location>
        <position position="8"/>
    </location>
</feature>
<feature type="modified residue" description="Phosphothreonine" evidence="2">
    <location>
        <position position="101"/>
    </location>
</feature>
<feature type="modified residue" description="Phosphothreonine" evidence="2">
    <location>
        <position position="102"/>
    </location>
</feature>
<feature type="modified residue" description="3'-nitrotyrosine" evidence="1">
    <location>
        <position position="316"/>
    </location>
</feature>
<feature type="modified residue" description="Phosphotyrosine" evidence="1">
    <location>
        <position position="504"/>
    </location>
</feature>
<feature type="modified residue" description="Phosphothreonine" evidence="1">
    <location>
        <position position="509"/>
    </location>
</feature>
<feature type="modified residue" description="Phosphoserine" evidence="6">
    <location>
        <position position="521"/>
    </location>
</feature>
<feature type="modified residue" description="Phosphoserine" evidence="6">
    <location>
        <position position="522"/>
    </location>
</feature>
<feature type="modified residue" description="Phosphoserine" evidence="1">
    <location>
        <position position="537"/>
    </location>
</feature>
<feature type="modified residue" description="Phosphoserine" evidence="1">
    <location>
        <position position="540"/>
    </location>
</feature>
<feature type="modified residue" description="Phosphoserine" evidence="1">
    <location>
        <position position="542"/>
    </location>
</feature>
<feature type="sequence conflict" description="In Ref. 2; AAB07042." evidence="5" ref="2">
    <original>H</original>
    <variation>Y</variation>
    <location>
        <position position="3"/>
    </location>
</feature>